<reference key="1">
    <citation type="journal article" date="2006" name="Nature">
        <title>Global trends of whole-genome duplications revealed by the ciliate Paramecium tetraurelia.</title>
        <authorList>
            <person name="Aury J.-M."/>
            <person name="Jaillon O."/>
            <person name="Duret L."/>
            <person name="Noel B."/>
            <person name="Jubin C."/>
            <person name="Porcel B.M."/>
            <person name="Segurens B."/>
            <person name="Daubin V."/>
            <person name="Anthouard V."/>
            <person name="Aiach N."/>
            <person name="Arnaiz O."/>
            <person name="Billaut A."/>
            <person name="Beisson J."/>
            <person name="Blanc I."/>
            <person name="Bouhouche K."/>
            <person name="Camara F."/>
            <person name="Duharcourt S."/>
            <person name="Guigo R."/>
            <person name="Gogendeau D."/>
            <person name="Katinka M."/>
            <person name="Keller A.-M."/>
            <person name="Kissmehl R."/>
            <person name="Klotz C."/>
            <person name="Koll F."/>
            <person name="Le Mouel A."/>
            <person name="Lepere G."/>
            <person name="Malinsky S."/>
            <person name="Nowacki M."/>
            <person name="Nowak J.K."/>
            <person name="Plattner H."/>
            <person name="Poulain J."/>
            <person name="Ruiz F."/>
            <person name="Serrano V."/>
            <person name="Zagulski M."/>
            <person name="Dessen P."/>
            <person name="Betermier M."/>
            <person name="Weissenbach J."/>
            <person name="Scarpelli C."/>
            <person name="Schaechter V."/>
            <person name="Sperling L."/>
            <person name="Meyer E."/>
            <person name="Cohen J."/>
            <person name="Wincker P."/>
        </authorList>
    </citation>
    <scope>NUCLEOTIDE SEQUENCE [LARGE SCALE GENOMIC DNA]</scope>
    <source>
        <strain>Stock d4-2</strain>
    </source>
</reference>
<feature type="chain" id="PRO_0000307828" description="Large ribosomal subunit protein uL30B">
    <location>
        <begin position="1"/>
        <end position="248"/>
    </location>
</feature>
<feature type="region of interest" description="Disordered" evidence="2">
    <location>
        <begin position="1"/>
        <end position="45"/>
    </location>
</feature>
<feature type="compositionally biased region" description="Basic and acidic residues" evidence="2">
    <location>
        <begin position="8"/>
        <end position="41"/>
    </location>
</feature>
<keyword id="KW-1185">Reference proteome</keyword>
<keyword id="KW-0687">Ribonucleoprotein</keyword>
<keyword id="KW-0689">Ribosomal protein</keyword>
<keyword id="KW-0694">RNA-binding</keyword>
<evidence type="ECO:0000250" key="1"/>
<evidence type="ECO:0000256" key="2">
    <source>
        <dbReference type="SAM" id="MobiDB-lite"/>
    </source>
</evidence>
<evidence type="ECO:0000305" key="3"/>
<accession>A0BD73</accession>
<proteinExistence type="inferred from homology"/>
<sequence>MSQKKQKIQVEQKVPENVAKKTQRDSKLRDAVAKRRTERLAANKTRRAQWEKTAQAYEAEYKAADKSLVDNLRKAKTEGGFYVPAEAKLILVVRIRGINTLNPQVRQTLRLLKLRQLHNAAFVRVNKATIEMIRKVEPYVTYGYPSRAVIKNLIYKRGYAKINGQRIPITNNNVIEQQLGKVGIHSVEDLIHEITTVGPHFKEANRFLWAFKLRGPRGGFIAKRRSFINQGDWGNREDLINDLVKRMI</sequence>
<comment type="function">
    <text evidence="1">Binds to G-rich structures in 28S rRNA and in mRNAs. Plays a regulatory role in the translation apparatus; inhibits cell-free translation of mRNAs (By similarity).</text>
</comment>
<comment type="similarity">
    <text evidence="3">Belongs to the universal ribosomal protein uL30 family.</text>
</comment>
<name>RL72_PARTE</name>
<protein>
    <recommendedName>
        <fullName evidence="3">Large ribosomal subunit protein uL30B</fullName>
    </recommendedName>
    <alternativeName>
        <fullName>60S ribosomal protein L7 2</fullName>
    </alternativeName>
</protein>
<gene>
    <name type="primary">Rpl7-2</name>
    <name type="ORF">GSPATT00004584001</name>
</gene>
<dbReference type="EMBL" id="CT867986">
    <property type="protein sequence ID" value="CAK56490.1"/>
    <property type="molecule type" value="Genomic_DNA"/>
</dbReference>
<dbReference type="RefSeq" id="XP_001423888.1">
    <property type="nucleotide sequence ID" value="XM_001423851.1"/>
</dbReference>
<dbReference type="SMR" id="A0BD73"/>
<dbReference type="FunCoup" id="A0BD73">
    <property type="interactions" value="1056"/>
</dbReference>
<dbReference type="STRING" id="5888.A0BD73"/>
<dbReference type="EnsemblProtists" id="CAK56490">
    <property type="protein sequence ID" value="CAK56490"/>
    <property type="gene ID" value="GSPATT00004584001"/>
</dbReference>
<dbReference type="GeneID" id="5009672"/>
<dbReference type="KEGG" id="ptm:GSPATT00004584001"/>
<dbReference type="eggNOG" id="KOG3184">
    <property type="taxonomic scope" value="Eukaryota"/>
</dbReference>
<dbReference type="HOGENOM" id="CLU_055156_0_2_1"/>
<dbReference type="InParanoid" id="A0BD73"/>
<dbReference type="OMA" id="INMMRIV"/>
<dbReference type="OrthoDB" id="28644at2759"/>
<dbReference type="Proteomes" id="UP000000600">
    <property type="component" value="Partially assembled WGS sequence"/>
</dbReference>
<dbReference type="GO" id="GO:0022625">
    <property type="term" value="C:cytosolic large ribosomal subunit"/>
    <property type="evidence" value="ECO:0000318"/>
    <property type="project" value="GO_Central"/>
</dbReference>
<dbReference type="GO" id="GO:0003723">
    <property type="term" value="F:RNA binding"/>
    <property type="evidence" value="ECO:0000318"/>
    <property type="project" value="GO_Central"/>
</dbReference>
<dbReference type="GO" id="GO:0003735">
    <property type="term" value="F:structural constituent of ribosome"/>
    <property type="evidence" value="ECO:0000318"/>
    <property type="project" value="GO_Central"/>
</dbReference>
<dbReference type="GO" id="GO:0000463">
    <property type="term" value="P:maturation of LSU-rRNA from tricistronic rRNA transcript (SSU-rRNA, 5.8S rRNA, LSU-rRNA)"/>
    <property type="evidence" value="ECO:0000318"/>
    <property type="project" value="GO_Central"/>
</dbReference>
<dbReference type="CDD" id="cd01657">
    <property type="entry name" value="Ribosomal_L7_archeal_euk"/>
    <property type="match status" value="1"/>
</dbReference>
<dbReference type="FunFam" id="3.30.1390.20:FF:000003">
    <property type="entry name" value="60S ribosomal protein L7"/>
    <property type="match status" value="1"/>
</dbReference>
<dbReference type="Gene3D" id="3.30.1390.20">
    <property type="entry name" value="Ribosomal protein L30, ferredoxin-like fold domain"/>
    <property type="match status" value="2"/>
</dbReference>
<dbReference type="InterPro" id="IPR036919">
    <property type="entry name" value="Ribo_uL30_ferredoxin-like_sf"/>
</dbReference>
<dbReference type="InterPro" id="IPR039699">
    <property type="entry name" value="Ribosomal_uL30"/>
</dbReference>
<dbReference type="InterPro" id="IPR005998">
    <property type="entry name" value="Ribosomal_uL30_euk"/>
</dbReference>
<dbReference type="InterPro" id="IPR035808">
    <property type="entry name" value="Ribosomal_uL30_euk_arc"/>
</dbReference>
<dbReference type="InterPro" id="IPR016082">
    <property type="entry name" value="Ribosomal_uL30_ferredoxin-like"/>
</dbReference>
<dbReference type="InterPro" id="IPR012988">
    <property type="entry name" value="Ribosomal_uL30_N_euk"/>
</dbReference>
<dbReference type="NCBIfam" id="TIGR01310">
    <property type="entry name" value="uL30_euk"/>
    <property type="match status" value="1"/>
</dbReference>
<dbReference type="PANTHER" id="PTHR11524">
    <property type="entry name" value="60S RIBOSOMAL PROTEIN L7"/>
    <property type="match status" value="1"/>
</dbReference>
<dbReference type="PANTHER" id="PTHR11524:SF16">
    <property type="entry name" value="LARGE RIBOSOMAL SUBUNIT PROTEIN UL30"/>
    <property type="match status" value="1"/>
</dbReference>
<dbReference type="Pfam" id="PF00327">
    <property type="entry name" value="Ribosomal_L30"/>
    <property type="match status" value="1"/>
</dbReference>
<dbReference type="Pfam" id="PF08079">
    <property type="entry name" value="Ribosomal_L30_N"/>
    <property type="match status" value="1"/>
</dbReference>
<dbReference type="SUPFAM" id="SSF55129">
    <property type="entry name" value="Ribosomal protein L30p/L7e"/>
    <property type="match status" value="1"/>
</dbReference>
<organism>
    <name type="scientific">Paramecium tetraurelia</name>
    <dbReference type="NCBI Taxonomy" id="5888"/>
    <lineage>
        <taxon>Eukaryota</taxon>
        <taxon>Sar</taxon>
        <taxon>Alveolata</taxon>
        <taxon>Ciliophora</taxon>
        <taxon>Intramacronucleata</taxon>
        <taxon>Oligohymenophorea</taxon>
        <taxon>Peniculida</taxon>
        <taxon>Parameciidae</taxon>
        <taxon>Paramecium</taxon>
    </lineage>
</organism>